<dbReference type="EMBL" id="AE000512">
    <property type="protein sequence ID" value="AAD36825.1"/>
    <property type="molecule type" value="Genomic_DNA"/>
</dbReference>
<dbReference type="PIR" id="A72215">
    <property type="entry name" value="A72215"/>
</dbReference>
<dbReference type="RefSeq" id="NP_229558.1">
    <property type="nucleotide sequence ID" value="NC_000853.1"/>
</dbReference>
<dbReference type="RefSeq" id="WP_004082307.1">
    <property type="nucleotide sequence ID" value="NC_000853.1"/>
</dbReference>
<dbReference type="SMR" id="Q9X282"/>
<dbReference type="FunCoup" id="Q9X282">
    <property type="interactions" value="270"/>
</dbReference>
<dbReference type="STRING" id="243274.TM_1761"/>
<dbReference type="PaxDb" id="243274-THEMA_05420"/>
<dbReference type="EnsemblBacteria" id="AAD36825">
    <property type="protein sequence ID" value="AAD36825"/>
    <property type="gene ID" value="TM_1761"/>
</dbReference>
<dbReference type="KEGG" id="tma:TM1761"/>
<dbReference type="KEGG" id="tmi:THEMA_05420"/>
<dbReference type="KEGG" id="tmm:Tmari_1770"/>
<dbReference type="KEGG" id="tmw:THMA_1805"/>
<dbReference type="eggNOG" id="COG0556">
    <property type="taxonomic scope" value="Bacteria"/>
</dbReference>
<dbReference type="InParanoid" id="Q9X282"/>
<dbReference type="OrthoDB" id="9806651at2"/>
<dbReference type="Proteomes" id="UP000008183">
    <property type="component" value="Chromosome"/>
</dbReference>
<dbReference type="GO" id="GO:0005737">
    <property type="term" value="C:cytoplasm"/>
    <property type="evidence" value="ECO:0007669"/>
    <property type="project" value="UniProtKB-SubCell"/>
</dbReference>
<dbReference type="GO" id="GO:0009380">
    <property type="term" value="C:excinuclease repair complex"/>
    <property type="evidence" value="ECO:0000318"/>
    <property type="project" value="GO_Central"/>
</dbReference>
<dbReference type="GO" id="GO:0005524">
    <property type="term" value="F:ATP binding"/>
    <property type="evidence" value="ECO:0007669"/>
    <property type="project" value="UniProtKB-UniRule"/>
</dbReference>
<dbReference type="GO" id="GO:0016887">
    <property type="term" value="F:ATP hydrolysis activity"/>
    <property type="evidence" value="ECO:0007669"/>
    <property type="project" value="InterPro"/>
</dbReference>
<dbReference type="GO" id="GO:0003677">
    <property type="term" value="F:DNA binding"/>
    <property type="evidence" value="ECO:0007669"/>
    <property type="project" value="UniProtKB-UniRule"/>
</dbReference>
<dbReference type="GO" id="GO:0009381">
    <property type="term" value="F:excinuclease ABC activity"/>
    <property type="evidence" value="ECO:0007669"/>
    <property type="project" value="UniProtKB-UniRule"/>
</dbReference>
<dbReference type="GO" id="GO:0000715">
    <property type="term" value="P:nucleotide-excision repair, DNA damage recognition"/>
    <property type="evidence" value="ECO:0000318"/>
    <property type="project" value="GO_Central"/>
</dbReference>
<dbReference type="GO" id="GO:0009432">
    <property type="term" value="P:SOS response"/>
    <property type="evidence" value="ECO:0007669"/>
    <property type="project" value="UniProtKB-UniRule"/>
</dbReference>
<dbReference type="CDD" id="cd17916">
    <property type="entry name" value="DEXHc_UvrB"/>
    <property type="match status" value="1"/>
</dbReference>
<dbReference type="Gene3D" id="3.40.50.300">
    <property type="entry name" value="P-loop containing nucleotide triphosphate hydrolases"/>
    <property type="match status" value="3"/>
</dbReference>
<dbReference type="Gene3D" id="4.10.860.10">
    <property type="entry name" value="UVR domain"/>
    <property type="match status" value="1"/>
</dbReference>
<dbReference type="HAMAP" id="MF_00204">
    <property type="entry name" value="UvrB"/>
    <property type="match status" value="1"/>
</dbReference>
<dbReference type="InterPro" id="IPR006935">
    <property type="entry name" value="Helicase/UvrB_N"/>
</dbReference>
<dbReference type="InterPro" id="IPR014001">
    <property type="entry name" value="Helicase_ATP-bd"/>
</dbReference>
<dbReference type="InterPro" id="IPR001650">
    <property type="entry name" value="Helicase_C-like"/>
</dbReference>
<dbReference type="InterPro" id="IPR027417">
    <property type="entry name" value="P-loop_NTPase"/>
</dbReference>
<dbReference type="InterPro" id="IPR001943">
    <property type="entry name" value="UVR_dom"/>
</dbReference>
<dbReference type="InterPro" id="IPR036876">
    <property type="entry name" value="UVR_dom_sf"/>
</dbReference>
<dbReference type="InterPro" id="IPR004807">
    <property type="entry name" value="UvrB"/>
</dbReference>
<dbReference type="InterPro" id="IPR041471">
    <property type="entry name" value="UvrB_inter"/>
</dbReference>
<dbReference type="InterPro" id="IPR024759">
    <property type="entry name" value="UvrB_YAD/RRR_dom"/>
</dbReference>
<dbReference type="NCBIfam" id="NF003673">
    <property type="entry name" value="PRK05298.1"/>
    <property type="match status" value="1"/>
</dbReference>
<dbReference type="NCBIfam" id="TIGR00631">
    <property type="entry name" value="uvrb"/>
    <property type="match status" value="1"/>
</dbReference>
<dbReference type="PANTHER" id="PTHR24029">
    <property type="entry name" value="UVRABC SYSTEM PROTEIN B"/>
    <property type="match status" value="1"/>
</dbReference>
<dbReference type="PANTHER" id="PTHR24029:SF0">
    <property type="entry name" value="UVRABC SYSTEM PROTEIN B"/>
    <property type="match status" value="1"/>
</dbReference>
<dbReference type="Pfam" id="PF00271">
    <property type="entry name" value="Helicase_C"/>
    <property type="match status" value="1"/>
</dbReference>
<dbReference type="Pfam" id="PF04851">
    <property type="entry name" value="ResIII"/>
    <property type="match status" value="1"/>
</dbReference>
<dbReference type="Pfam" id="PF02151">
    <property type="entry name" value="UVR"/>
    <property type="match status" value="1"/>
</dbReference>
<dbReference type="Pfam" id="PF12344">
    <property type="entry name" value="UvrB"/>
    <property type="match status" value="1"/>
</dbReference>
<dbReference type="Pfam" id="PF17757">
    <property type="entry name" value="UvrB_inter"/>
    <property type="match status" value="1"/>
</dbReference>
<dbReference type="SMART" id="SM00487">
    <property type="entry name" value="DEXDc"/>
    <property type="match status" value="1"/>
</dbReference>
<dbReference type="SMART" id="SM00490">
    <property type="entry name" value="HELICc"/>
    <property type="match status" value="1"/>
</dbReference>
<dbReference type="SUPFAM" id="SSF46600">
    <property type="entry name" value="C-terminal UvrC-binding domain of UvrB"/>
    <property type="match status" value="1"/>
</dbReference>
<dbReference type="SUPFAM" id="SSF52540">
    <property type="entry name" value="P-loop containing nucleoside triphosphate hydrolases"/>
    <property type="match status" value="2"/>
</dbReference>
<dbReference type="PROSITE" id="PS51192">
    <property type="entry name" value="HELICASE_ATP_BIND_1"/>
    <property type="match status" value="1"/>
</dbReference>
<dbReference type="PROSITE" id="PS51194">
    <property type="entry name" value="HELICASE_CTER"/>
    <property type="match status" value="1"/>
</dbReference>
<dbReference type="PROSITE" id="PS50151">
    <property type="entry name" value="UVR"/>
    <property type="match status" value="1"/>
</dbReference>
<evidence type="ECO:0000255" key="1">
    <source>
        <dbReference type="HAMAP-Rule" id="MF_00204"/>
    </source>
</evidence>
<comment type="function">
    <text evidence="1">The UvrABC repair system catalyzes the recognition and processing of DNA lesions. A damage recognition complex composed of 2 UvrA and 2 UvrB subunits scans DNA for abnormalities. Upon binding of the UvrA(2)B(2) complex to a putative damaged site, the DNA wraps around one UvrB monomer. DNA wrap is dependent on ATP binding by UvrB and probably causes local melting of the DNA helix, facilitating insertion of UvrB beta-hairpin between the DNA strands. Then UvrB probes one DNA strand for the presence of a lesion. If a lesion is found the UvrA subunits dissociate and the UvrB-DNA preincision complex is formed. This complex is subsequently bound by UvrC and the second UvrB is released. If no lesion is found, the DNA wraps around the other UvrB subunit that will check the other stand for damage.</text>
</comment>
<comment type="subunit">
    <text evidence="1">Forms a heterotetramer with UvrA during the search for lesions. Interacts with UvrC in an incision complex.</text>
</comment>
<comment type="subcellular location">
    <subcellularLocation>
        <location evidence="1">Cytoplasm</location>
    </subcellularLocation>
</comment>
<comment type="domain">
    <text evidence="1">The beta-hairpin motif is involved in DNA binding.</text>
</comment>
<comment type="similarity">
    <text evidence="1">Belongs to the UvrB family.</text>
</comment>
<keyword id="KW-0067">ATP-binding</keyword>
<keyword id="KW-0963">Cytoplasm</keyword>
<keyword id="KW-0227">DNA damage</keyword>
<keyword id="KW-0228">DNA excision</keyword>
<keyword id="KW-0234">DNA repair</keyword>
<keyword id="KW-0267">Excision nuclease</keyword>
<keyword id="KW-0547">Nucleotide-binding</keyword>
<keyword id="KW-1185">Reference proteome</keyword>
<keyword id="KW-0742">SOS response</keyword>
<proteinExistence type="inferred from homology"/>
<gene>
    <name evidence="1" type="primary">uvrB</name>
    <name type="ordered locus">TM_1761</name>
</gene>
<accession>Q9X282</accession>
<protein>
    <recommendedName>
        <fullName evidence="1">UvrABC system protein B</fullName>
        <shortName evidence="1">Protein UvrB</shortName>
    </recommendedName>
    <alternativeName>
        <fullName evidence="1">Excinuclease ABC subunit B</fullName>
    </alternativeName>
</protein>
<feature type="chain" id="PRO_0000138439" description="UvrABC system protein B">
    <location>
        <begin position="1"/>
        <end position="664"/>
    </location>
</feature>
<feature type="domain" description="Helicase ATP-binding" evidence="1">
    <location>
        <begin position="23"/>
        <end position="412"/>
    </location>
</feature>
<feature type="domain" description="Helicase C-terminal" evidence="1">
    <location>
        <begin position="429"/>
        <end position="588"/>
    </location>
</feature>
<feature type="domain" description="UVR" evidence="1">
    <location>
        <begin position="622"/>
        <end position="657"/>
    </location>
</feature>
<feature type="short sequence motif" description="Beta-hairpin">
    <location>
        <begin position="89"/>
        <end position="112"/>
    </location>
</feature>
<feature type="binding site" evidence="1">
    <location>
        <begin position="36"/>
        <end position="43"/>
    </location>
    <ligand>
        <name>ATP</name>
        <dbReference type="ChEBI" id="CHEBI:30616"/>
    </ligand>
</feature>
<reference key="1">
    <citation type="journal article" date="1999" name="Nature">
        <title>Evidence for lateral gene transfer between Archaea and Bacteria from genome sequence of Thermotoga maritima.</title>
        <authorList>
            <person name="Nelson K.E."/>
            <person name="Clayton R.A."/>
            <person name="Gill S.R."/>
            <person name="Gwinn M.L."/>
            <person name="Dodson R.J."/>
            <person name="Haft D.H."/>
            <person name="Hickey E.K."/>
            <person name="Peterson J.D."/>
            <person name="Nelson W.C."/>
            <person name="Ketchum K.A."/>
            <person name="McDonald L.A."/>
            <person name="Utterback T.R."/>
            <person name="Malek J.A."/>
            <person name="Linher K.D."/>
            <person name="Garrett M.M."/>
            <person name="Stewart A.M."/>
            <person name="Cotton M.D."/>
            <person name="Pratt M.S."/>
            <person name="Phillips C.A."/>
            <person name="Richardson D.L."/>
            <person name="Heidelberg J.F."/>
            <person name="Sutton G.G."/>
            <person name="Fleischmann R.D."/>
            <person name="Eisen J.A."/>
            <person name="White O."/>
            <person name="Salzberg S.L."/>
            <person name="Smith H.O."/>
            <person name="Venter J.C."/>
            <person name="Fraser C.M."/>
        </authorList>
    </citation>
    <scope>NUCLEOTIDE SEQUENCE [LARGE SCALE GENOMIC DNA]</scope>
    <source>
        <strain>ATCC 43589 / DSM 3109 / JCM 10099 / NBRC 100826 / MSB8</strain>
    </source>
</reference>
<sequence length="664" mass="76684">MFKLVSEFEPTGDQPQAIEKLVEGLNRGMRFQTLLGVTGSGKTFTMANVIARVNRPALVISPNKTLAAQLYQEFKTFFPENRVEFFISYYDYYQPEAYIPTKDLYIEKNADINDVIVRMRMSTLKSVRTRRDVVVVASVSCIYATGDPNDFDRMNINLAVGDRIDVLELAERLARIGYQRTEDVSLSGCFRLKGDTVEIYPTYQDEGIRIEFFGDEVDSITLIDRFNRTTLEHLDKIIIYPAVEFITTEEKLKRAVESIREELNERLSELKKQGKILEYERLKQRTLNDIELLETMGYCPGIENYSRHFDGRKPGEPPYTLLDYFDKDFIVFIDESHITVPQLRAMYNGDRSRKKNLVEYGFRLPSAYDNRPLTFEEFLKKTGQIIFVSATPGDFELSISEQVVEQIIRPTGLVDPEVEVRPTAGQVDDLVNEIVKVKERGERALVTVLTKKTAELLSEHLTELGIRSLYLHSELDAIERVEVLKKLRRGDVDVVVGVNLLREGLDLPEVSLVAIMDADVEGFLRSETTLIQIIGRTARNVNGKVIMYADRITNAMKRAIEETNRRRRIQLEYNRKHGITPRSVIKPLEIEVFEQFMVKEEPERYGDTVKNIFEMKKTLSPEEYMAVLEEEMYRAASELRYEDAAALRDELFRIREEIKKKKGL</sequence>
<name>UVRB_THEMA</name>
<organism>
    <name type="scientific">Thermotoga maritima (strain ATCC 43589 / DSM 3109 / JCM 10099 / NBRC 100826 / MSB8)</name>
    <dbReference type="NCBI Taxonomy" id="243274"/>
    <lineage>
        <taxon>Bacteria</taxon>
        <taxon>Thermotogati</taxon>
        <taxon>Thermotogota</taxon>
        <taxon>Thermotogae</taxon>
        <taxon>Thermotogales</taxon>
        <taxon>Thermotogaceae</taxon>
        <taxon>Thermotoga</taxon>
    </lineage>
</organism>